<organism>
    <name type="scientific">Syntrophobacter fumaroxidans (strain DSM 10017 / MPOB)</name>
    <dbReference type="NCBI Taxonomy" id="335543"/>
    <lineage>
        <taxon>Bacteria</taxon>
        <taxon>Pseudomonadati</taxon>
        <taxon>Thermodesulfobacteriota</taxon>
        <taxon>Syntrophobacteria</taxon>
        <taxon>Syntrophobacterales</taxon>
        <taxon>Syntrophobacteraceae</taxon>
        <taxon>Syntrophobacter</taxon>
    </lineage>
</organism>
<name>PDXJ_SYNFM</name>
<reference key="1">
    <citation type="submission" date="2006-10" db="EMBL/GenBank/DDBJ databases">
        <title>Complete sequence of Syntrophobacter fumaroxidans MPOB.</title>
        <authorList>
            <consortium name="US DOE Joint Genome Institute"/>
            <person name="Copeland A."/>
            <person name="Lucas S."/>
            <person name="Lapidus A."/>
            <person name="Barry K."/>
            <person name="Detter J.C."/>
            <person name="Glavina del Rio T."/>
            <person name="Hammon N."/>
            <person name="Israni S."/>
            <person name="Pitluck S."/>
            <person name="Goltsman E.G."/>
            <person name="Martinez M."/>
            <person name="Schmutz J."/>
            <person name="Larimer F."/>
            <person name="Land M."/>
            <person name="Hauser L."/>
            <person name="Kyrpides N."/>
            <person name="Kim E."/>
            <person name="Boone D.R."/>
            <person name="Brockman F."/>
            <person name="Culley D."/>
            <person name="Ferry J."/>
            <person name="Gunsalus R."/>
            <person name="McInerney M.J."/>
            <person name="Morrison M."/>
            <person name="Plugge C."/>
            <person name="Rohlin L."/>
            <person name="Scholten J."/>
            <person name="Sieber J."/>
            <person name="Stams A.J.M."/>
            <person name="Worm P."/>
            <person name="Henstra A.M."/>
            <person name="Richardson P."/>
        </authorList>
    </citation>
    <scope>NUCLEOTIDE SEQUENCE [LARGE SCALE GENOMIC DNA]</scope>
    <source>
        <strain>DSM 10017 / MPOB</strain>
    </source>
</reference>
<evidence type="ECO:0000255" key="1">
    <source>
        <dbReference type="HAMAP-Rule" id="MF_00279"/>
    </source>
</evidence>
<comment type="function">
    <text evidence="1">Catalyzes the complicated ring closure reaction between the two acyclic compounds 1-deoxy-D-xylulose-5-phosphate (DXP) and 3-amino-2-oxopropyl phosphate (1-amino-acetone-3-phosphate or AAP) to form pyridoxine 5'-phosphate (PNP) and inorganic phosphate.</text>
</comment>
<comment type="catalytic activity">
    <reaction evidence="1">
        <text>3-amino-2-oxopropyl phosphate + 1-deoxy-D-xylulose 5-phosphate = pyridoxine 5'-phosphate + phosphate + 2 H2O + H(+)</text>
        <dbReference type="Rhea" id="RHEA:15265"/>
        <dbReference type="ChEBI" id="CHEBI:15377"/>
        <dbReference type="ChEBI" id="CHEBI:15378"/>
        <dbReference type="ChEBI" id="CHEBI:43474"/>
        <dbReference type="ChEBI" id="CHEBI:57279"/>
        <dbReference type="ChEBI" id="CHEBI:57792"/>
        <dbReference type="ChEBI" id="CHEBI:58589"/>
        <dbReference type="EC" id="2.6.99.2"/>
    </reaction>
</comment>
<comment type="pathway">
    <text evidence="1">Cofactor biosynthesis; pyridoxine 5'-phosphate biosynthesis; pyridoxine 5'-phosphate from D-erythrose 4-phosphate: step 5/5.</text>
</comment>
<comment type="subunit">
    <text evidence="1">Homooctamer; tetramer of dimers.</text>
</comment>
<comment type="subcellular location">
    <subcellularLocation>
        <location evidence="1">Cytoplasm</location>
    </subcellularLocation>
</comment>
<comment type="similarity">
    <text evidence="1">Belongs to the PNP synthase family.</text>
</comment>
<proteinExistence type="inferred from homology"/>
<protein>
    <recommendedName>
        <fullName evidence="1">Pyridoxine 5'-phosphate synthase</fullName>
        <shortName evidence="1">PNP synthase</shortName>
        <ecNumber evidence="1">2.6.99.2</ecNumber>
    </recommendedName>
</protein>
<sequence>MARLAINVDHVATVRQARRASEPDPVTAAALAELAGAHGIVVHLREDRRHIQDRDVQVLRQTVKSKLNLEMAATREMIQIALNIKPEMVTLVPEKRQELTTEGGLDVVSFEGALEEAIKTLHEGGIAVSLFINPDPRHIKVAHRLEAEYVEIHTGMFAEADSYTRRQEEYERVVTSAKLARKLGLGAHAGHGIGYQNVLWLRNIPEIQEFSIGHAVIARAVLVGMERAVREMLALVNG</sequence>
<dbReference type="EC" id="2.6.99.2" evidence="1"/>
<dbReference type="EMBL" id="CP000478">
    <property type="protein sequence ID" value="ABK17848.1"/>
    <property type="molecule type" value="Genomic_DNA"/>
</dbReference>
<dbReference type="RefSeq" id="WP_011699017.1">
    <property type="nucleotide sequence ID" value="NC_008554.1"/>
</dbReference>
<dbReference type="SMR" id="A0LK96"/>
<dbReference type="FunCoup" id="A0LK96">
    <property type="interactions" value="352"/>
</dbReference>
<dbReference type="STRING" id="335543.Sfum_2166"/>
<dbReference type="KEGG" id="sfu:Sfum_2166"/>
<dbReference type="eggNOG" id="COG0854">
    <property type="taxonomic scope" value="Bacteria"/>
</dbReference>
<dbReference type="HOGENOM" id="CLU_074563_0_0_7"/>
<dbReference type="InParanoid" id="A0LK96"/>
<dbReference type="OrthoDB" id="9806590at2"/>
<dbReference type="UniPathway" id="UPA00244">
    <property type="reaction ID" value="UER00313"/>
</dbReference>
<dbReference type="Proteomes" id="UP000001784">
    <property type="component" value="Chromosome"/>
</dbReference>
<dbReference type="GO" id="GO:0005829">
    <property type="term" value="C:cytosol"/>
    <property type="evidence" value="ECO:0007669"/>
    <property type="project" value="TreeGrafter"/>
</dbReference>
<dbReference type="GO" id="GO:0033856">
    <property type="term" value="F:pyridoxine 5'-phosphate synthase activity"/>
    <property type="evidence" value="ECO:0007669"/>
    <property type="project" value="UniProtKB-EC"/>
</dbReference>
<dbReference type="GO" id="GO:0008615">
    <property type="term" value="P:pyridoxine biosynthetic process"/>
    <property type="evidence" value="ECO:0007669"/>
    <property type="project" value="UniProtKB-UniRule"/>
</dbReference>
<dbReference type="CDD" id="cd00003">
    <property type="entry name" value="PNPsynthase"/>
    <property type="match status" value="1"/>
</dbReference>
<dbReference type="Gene3D" id="3.20.20.70">
    <property type="entry name" value="Aldolase class I"/>
    <property type="match status" value="1"/>
</dbReference>
<dbReference type="HAMAP" id="MF_00279">
    <property type="entry name" value="PdxJ"/>
    <property type="match status" value="1"/>
</dbReference>
<dbReference type="InterPro" id="IPR013785">
    <property type="entry name" value="Aldolase_TIM"/>
</dbReference>
<dbReference type="InterPro" id="IPR004569">
    <property type="entry name" value="PyrdxlP_synth_PdxJ"/>
</dbReference>
<dbReference type="InterPro" id="IPR036130">
    <property type="entry name" value="Pyridoxine-5'_phos_synth"/>
</dbReference>
<dbReference type="NCBIfam" id="TIGR00559">
    <property type="entry name" value="pdxJ"/>
    <property type="match status" value="1"/>
</dbReference>
<dbReference type="NCBIfam" id="NF003625">
    <property type="entry name" value="PRK05265.1-3"/>
    <property type="match status" value="1"/>
</dbReference>
<dbReference type="NCBIfam" id="NF003627">
    <property type="entry name" value="PRK05265.1-5"/>
    <property type="match status" value="1"/>
</dbReference>
<dbReference type="PANTHER" id="PTHR30456">
    <property type="entry name" value="PYRIDOXINE 5'-PHOSPHATE SYNTHASE"/>
    <property type="match status" value="1"/>
</dbReference>
<dbReference type="PANTHER" id="PTHR30456:SF0">
    <property type="entry name" value="PYRIDOXINE 5'-PHOSPHATE SYNTHASE"/>
    <property type="match status" value="1"/>
</dbReference>
<dbReference type="Pfam" id="PF03740">
    <property type="entry name" value="PdxJ"/>
    <property type="match status" value="1"/>
</dbReference>
<dbReference type="SUPFAM" id="SSF63892">
    <property type="entry name" value="Pyridoxine 5'-phosphate synthase"/>
    <property type="match status" value="1"/>
</dbReference>
<keyword id="KW-0963">Cytoplasm</keyword>
<keyword id="KW-0664">Pyridoxine biosynthesis</keyword>
<keyword id="KW-1185">Reference proteome</keyword>
<keyword id="KW-0808">Transferase</keyword>
<feature type="chain" id="PRO_1000022405" description="Pyridoxine 5'-phosphate synthase">
    <location>
        <begin position="1"/>
        <end position="238"/>
    </location>
</feature>
<feature type="active site" description="Proton acceptor" evidence="1">
    <location>
        <position position="43"/>
    </location>
</feature>
<feature type="active site" description="Proton acceptor" evidence="1">
    <location>
        <position position="70"/>
    </location>
</feature>
<feature type="active site" description="Proton donor" evidence="1">
    <location>
        <position position="191"/>
    </location>
</feature>
<feature type="binding site" evidence="1">
    <location>
        <position position="7"/>
    </location>
    <ligand>
        <name>3-amino-2-oxopropyl phosphate</name>
        <dbReference type="ChEBI" id="CHEBI:57279"/>
    </ligand>
</feature>
<feature type="binding site" evidence="1">
    <location>
        <begin position="9"/>
        <end position="10"/>
    </location>
    <ligand>
        <name>1-deoxy-D-xylulose 5-phosphate</name>
        <dbReference type="ChEBI" id="CHEBI:57792"/>
    </ligand>
</feature>
<feature type="binding site" evidence="1">
    <location>
        <position position="18"/>
    </location>
    <ligand>
        <name>3-amino-2-oxopropyl phosphate</name>
        <dbReference type="ChEBI" id="CHEBI:57279"/>
    </ligand>
</feature>
<feature type="binding site" evidence="1">
    <location>
        <position position="45"/>
    </location>
    <ligand>
        <name>1-deoxy-D-xylulose 5-phosphate</name>
        <dbReference type="ChEBI" id="CHEBI:57792"/>
    </ligand>
</feature>
<feature type="binding site" evidence="1">
    <location>
        <position position="50"/>
    </location>
    <ligand>
        <name>1-deoxy-D-xylulose 5-phosphate</name>
        <dbReference type="ChEBI" id="CHEBI:57792"/>
    </ligand>
</feature>
<feature type="binding site" evidence="1">
    <location>
        <position position="100"/>
    </location>
    <ligand>
        <name>1-deoxy-D-xylulose 5-phosphate</name>
        <dbReference type="ChEBI" id="CHEBI:57792"/>
    </ligand>
</feature>
<feature type="binding site" evidence="1">
    <location>
        <position position="192"/>
    </location>
    <ligand>
        <name>3-amino-2-oxopropyl phosphate</name>
        <dbReference type="ChEBI" id="CHEBI:57279"/>
    </ligand>
</feature>
<feature type="binding site" evidence="1">
    <location>
        <begin position="213"/>
        <end position="214"/>
    </location>
    <ligand>
        <name>3-amino-2-oxopropyl phosphate</name>
        <dbReference type="ChEBI" id="CHEBI:57279"/>
    </ligand>
</feature>
<feature type="site" description="Transition state stabilizer" evidence="1">
    <location>
        <position position="151"/>
    </location>
</feature>
<accession>A0LK96</accession>
<gene>
    <name evidence="1" type="primary">pdxJ</name>
    <name type="ordered locus">Sfum_2166</name>
</gene>